<dbReference type="EC" id="2.7.1.130" evidence="1"/>
<dbReference type="EMBL" id="BA000012">
    <property type="protein sequence ID" value="BAB53863.1"/>
    <property type="molecule type" value="Genomic_DNA"/>
</dbReference>
<dbReference type="RefSeq" id="WP_010915489.1">
    <property type="nucleotide sequence ID" value="NC_002678.2"/>
</dbReference>
<dbReference type="SMR" id="P58185"/>
<dbReference type="KEGG" id="mlo:mlr8270"/>
<dbReference type="PATRIC" id="fig|266835.9.peg.6608"/>
<dbReference type="eggNOG" id="COG1663">
    <property type="taxonomic scope" value="Bacteria"/>
</dbReference>
<dbReference type="HOGENOM" id="CLU_038816_0_0_5"/>
<dbReference type="UniPathway" id="UPA00359">
    <property type="reaction ID" value="UER00482"/>
</dbReference>
<dbReference type="Proteomes" id="UP000000552">
    <property type="component" value="Chromosome"/>
</dbReference>
<dbReference type="GO" id="GO:0005886">
    <property type="term" value="C:plasma membrane"/>
    <property type="evidence" value="ECO:0007669"/>
    <property type="project" value="TreeGrafter"/>
</dbReference>
<dbReference type="GO" id="GO:0005524">
    <property type="term" value="F:ATP binding"/>
    <property type="evidence" value="ECO:0007669"/>
    <property type="project" value="UniProtKB-UniRule"/>
</dbReference>
<dbReference type="GO" id="GO:0009029">
    <property type="term" value="F:tetraacyldisaccharide 4'-kinase activity"/>
    <property type="evidence" value="ECO:0007669"/>
    <property type="project" value="UniProtKB-UniRule"/>
</dbReference>
<dbReference type="GO" id="GO:0009245">
    <property type="term" value="P:lipid A biosynthetic process"/>
    <property type="evidence" value="ECO:0007669"/>
    <property type="project" value="UniProtKB-UniRule"/>
</dbReference>
<dbReference type="GO" id="GO:0009244">
    <property type="term" value="P:lipopolysaccharide core region biosynthetic process"/>
    <property type="evidence" value="ECO:0007669"/>
    <property type="project" value="TreeGrafter"/>
</dbReference>
<dbReference type="HAMAP" id="MF_00409">
    <property type="entry name" value="LpxK"/>
    <property type="match status" value="1"/>
</dbReference>
<dbReference type="InterPro" id="IPR003758">
    <property type="entry name" value="LpxK"/>
</dbReference>
<dbReference type="InterPro" id="IPR027417">
    <property type="entry name" value="P-loop_NTPase"/>
</dbReference>
<dbReference type="NCBIfam" id="TIGR00682">
    <property type="entry name" value="lpxK"/>
    <property type="match status" value="1"/>
</dbReference>
<dbReference type="PANTHER" id="PTHR42724">
    <property type="entry name" value="TETRAACYLDISACCHARIDE 4'-KINASE"/>
    <property type="match status" value="1"/>
</dbReference>
<dbReference type="PANTHER" id="PTHR42724:SF1">
    <property type="entry name" value="TETRAACYLDISACCHARIDE 4'-KINASE, MITOCHONDRIAL-RELATED"/>
    <property type="match status" value="1"/>
</dbReference>
<dbReference type="Pfam" id="PF02606">
    <property type="entry name" value="LpxK"/>
    <property type="match status" value="1"/>
</dbReference>
<dbReference type="SUPFAM" id="SSF52540">
    <property type="entry name" value="P-loop containing nucleoside triphosphate hydrolases"/>
    <property type="match status" value="1"/>
</dbReference>
<name>LPXK_RHILO</name>
<comment type="function">
    <text evidence="1">Transfers the gamma-phosphate of ATP to the 4'-position of a tetraacyldisaccharide 1-phosphate intermediate (termed DS-1-P) to form tetraacyldisaccharide 1,4'-bis-phosphate (lipid IVA).</text>
</comment>
<comment type="catalytic activity">
    <reaction evidence="1">
        <text>a lipid A disaccharide + ATP = a lipid IVA + ADP + H(+)</text>
        <dbReference type="Rhea" id="RHEA:67840"/>
        <dbReference type="ChEBI" id="CHEBI:15378"/>
        <dbReference type="ChEBI" id="CHEBI:30616"/>
        <dbReference type="ChEBI" id="CHEBI:176343"/>
        <dbReference type="ChEBI" id="CHEBI:176425"/>
        <dbReference type="ChEBI" id="CHEBI:456216"/>
        <dbReference type="EC" id="2.7.1.130"/>
    </reaction>
</comment>
<comment type="pathway">
    <text evidence="1">Glycolipid biosynthesis; lipid IV(A) biosynthesis; lipid IV(A) from (3R)-3-hydroxytetradecanoyl-[acyl-carrier-protein] and UDP-N-acetyl-alpha-D-glucosamine: step 6/6.</text>
</comment>
<comment type="similarity">
    <text evidence="1">Belongs to the LpxK family.</text>
</comment>
<sequence>MASEAPPFWWEEPDWKVLALSPLSAVYALVAGRVMRRARREKIEAPVLCVGNFTVGGTGKTPVAIALAQQAKRMQLKPGFLSRGHGGSFAEPHVVDAHHDAAKHVGDEPLLLAEHAPVAVTPNRAAGARLLMAKHGCDFLIMDDGFQSARIHIDYALIVVDARYGIGNGRVIPGGPLRAKIVDQLVFTSGLLKMGEGTAADAVVRQAARAGRPIFEARAEPISKAGLAGKRFLAFAGIGHPDKFFDTVREAGGEVVLSKPFPDHHFYAEDELAELAAVARAEGLGLITTAKDAARLRHGASQDFLNRLEVLEIDTVFELDHAPERIIEETLDAWRQRKLRS</sequence>
<proteinExistence type="inferred from homology"/>
<protein>
    <recommendedName>
        <fullName evidence="1">Tetraacyldisaccharide 4'-kinase</fullName>
        <ecNumber evidence="1">2.7.1.130</ecNumber>
    </recommendedName>
    <alternativeName>
        <fullName evidence="1">Lipid A 4'-kinase</fullName>
    </alternativeName>
</protein>
<gene>
    <name evidence="1" type="primary">lpxK</name>
    <name type="ordered locus">mlr8270</name>
</gene>
<keyword id="KW-0067">ATP-binding</keyword>
<keyword id="KW-0418">Kinase</keyword>
<keyword id="KW-0441">Lipid A biosynthesis</keyword>
<keyword id="KW-0444">Lipid biosynthesis</keyword>
<keyword id="KW-0443">Lipid metabolism</keyword>
<keyword id="KW-0547">Nucleotide-binding</keyword>
<keyword id="KW-0808">Transferase</keyword>
<accession>P58185</accession>
<organism>
    <name type="scientific">Mesorhizobium japonicum (strain LMG 29417 / CECT 9101 / MAFF 303099)</name>
    <name type="common">Mesorhizobium loti (strain MAFF 303099)</name>
    <dbReference type="NCBI Taxonomy" id="266835"/>
    <lineage>
        <taxon>Bacteria</taxon>
        <taxon>Pseudomonadati</taxon>
        <taxon>Pseudomonadota</taxon>
        <taxon>Alphaproteobacteria</taxon>
        <taxon>Hyphomicrobiales</taxon>
        <taxon>Phyllobacteriaceae</taxon>
        <taxon>Mesorhizobium</taxon>
    </lineage>
</organism>
<reference key="1">
    <citation type="journal article" date="2000" name="DNA Res.">
        <title>Complete genome structure of the nitrogen-fixing symbiotic bacterium Mesorhizobium loti.</title>
        <authorList>
            <person name="Kaneko T."/>
            <person name="Nakamura Y."/>
            <person name="Sato S."/>
            <person name="Asamizu E."/>
            <person name="Kato T."/>
            <person name="Sasamoto S."/>
            <person name="Watanabe A."/>
            <person name="Idesawa K."/>
            <person name="Ishikawa A."/>
            <person name="Kawashima K."/>
            <person name="Kimura T."/>
            <person name="Kishida Y."/>
            <person name="Kiyokawa C."/>
            <person name="Kohara M."/>
            <person name="Matsumoto M."/>
            <person name="Matsuno A."/>
            <person name="Mochizuki Y."/>
            <person name="Nakayama S."/>
            <person name="Nakazaki N."/>
            <person name="Shimpo S."/>
            <person name="Sugimoto M."/>
            <person name="Takeuchi C."/>
            <person name="Yamada M."/>
            <person name="Tabata S."/>
        </authorList>
    </citation>
    <scope>NUCLEOTIDE SEQUENCE [LARGE SCALE GENOMIC DNA]</scope>
    <source>
        <strain>LMG 29417 / CECT 9101 / MAFF 303099</strain>
    </source>
</reference>
<evidence type="ECO:0000255" key="1">
    <source>
        <dbReference type="HAMAP-Rule" id="MF_00409"/>
    </source>
</evidence>
<feature type="chain" id="PRO_0000190941" description="Tetraacyldisaccharide 4'-kinase">
    <location>
        <begin position="1"/>
        <end position="341"/>
    </location>
</feature>
<feature type="binding site" evidence="1">
    <location>
        <begin position="54"/>
        <end position="61"/>
    </location>
    <ligand>
        <name>ATP</name>
        <dbReference type="ChEBI" id="CHEBI:30616"/>
    </ligand>
</feature>